<gene>
    <name evidence="1" type="primary">rplT</name>
    <name evidence="1" type="synonym">rpl20</name>
    <name type="ordered locus">sync_0058</name>
</gene>
<evidence type="ECO:0000255" key="1">
    <source>
        <dbReference type="HAMAP-Rule" id="MF_00382"/>
    </source>
</evidence>
<evidence type="ECO:0000305" key="2"/>
<comment type="function">
    <text evidence="1">Binds directly to 23S ribosomal RNA and is necessary for the in vitro assembly process of the 50S ribosomal subunit. It is not involved in the protein synthesizing functions of that subunit.</text>
</comment>
<comment type="similarity">
    <text evidence="1">Belongs to the bacterial ribosomal protein bL20 family.</text>
</comment>
<proteinExistence type="inferred from homology"/>
<reference key="1">
    <citation type="journal article" date="2006" name="Proc. Natl. Acad. Sci. U.S.A.">
        <title>Genome sequence of Synechococcus CC9311: insights into adaptation to a coastal environment.</title>
        <authorList>
            <person name="Palenik B."/>
            <person name="Ren Q."/>
            <person name="Dupont C.L."/>
            <person name="Myers G.S."/>
            <person name="Heidelberg J.F."/>
            <person name="Badger J.H."/>
            <person name="Madupu R."/>
            <person name="Nelson W.C."/>
            <person name="Brinkac L.M."/>
            <person name="Dodson R.J."/>
            <person name="Durkin A.S."/>
            <person name="Daugherty S.C."/>
            <person name="Sullivan S.A."/>
            <person name="Khouri H."/>
            <person name="Mohamoud Y."/>
            <person name="Halpin R."/>
            <person name="Paulsen I.T."/>
        </authorList>
    </citation>
    <scope>NUCLEOTIDE SEQUENCE [LARGE SCALE GENOMIC DNA]</scope>
    <source>
        <strain>CC9311</strain>
    </source>
</reference>
<accession>Q0IE26</accession>
<keyword id="KW-1185">Reference proteome</keyword>
<keyword id="KW-0687">Ribonucleoprotein</keyword>
<keyword id="KW-0689">Ribosomal protein</keyword>
<keyword id="KW-0694">RNA-binding</keyword>
<keyword id="KW-0699">rRNA-binding</keyword>
<name>RL20_SYNS3</name>
<sequence>MARVKRGNVARKRRNKILRLARGFRGSNGTLFRTANQRVMKALCNAYRDRRRRKRDFRRLWIARINAAARMNGVSYSRLIGGLKKADVRINRKMLAQMAVVDPASFANVVNATQG</sequence>
<organism>
    <name type="scientific">Synechococcus sp. (strain CC9311)</name>
    <dbReference type="NCBI Taxonomy" id="64471"/>
    <lineage>
        <taxon>Bacteria</taxon>
        <taxon>Bacillati</taxon>
        <taxon>Cyanobacteriota</taxon>
        <taxon>Cyanophyceae</taxon>
        <taxon>Synechococcales</taxon>
        <taxon>Synechococcaceae</taxon>
        <taxon>Synechococcus</taxon>
    </lineage>
</organism>
<protein>
    <recommendedName>
        <fullName evidence="1">Large ribosomal subunit protein bL20</fullName>
    </recommendedName>
    <alternativeName>
        <fullName evidence="2">50S ribosomal protein L20</fullName>
    </alternativeName>
</protein>
<dbReference type="EMBL" id="CP000435">
    <property type="protein sequence ID" value="ABI47747.1"/>
    <property type="molecule type" value="Genomic_DNA"/>
</dbReference>
<dbReference type="RefSeq" id="WP_006855011.1">
    <property type="nucleotide sequence ID" value="NC_008319.1"/>
</dbReference>
<dbReference type="SMR" id="Q0IE26"/>
<dbReference type="STRING" id="64471.sync_0058"/>
<dbReference type="KEGG" id="syg:sync_0058"/>
<dbReference type="eggNOG" id="COG0292">
    <property type="taxonomic scope" value="Bacteria"/>
</dbReference>
<dbReference type="HOGENOM" id="CLU_123265_0_1_3"/>
<dbReference type="OrthoDB" id="9808966at2"/>
<dbReference type="Proteomes" id="UP000001961">
    <property type="component" value="Chromosome"/>
</dbReference>
<dbReference type="GO" id="GO:1990904">
    <property type="term" value="C:ribonucleoprotein complex"/>
    <property type="evidence" value="ECO:0007669"/>
    <property type="project" value="UniProtKB-KW"/>
</dbReference>
<dbReference type="GO" id="GO:0005840">
    <property type="term" value="C:ribosome"/>
    <property type="evidence" value="ECO:0007669"/>
    <property type="project" value="UniProtKB-KW"/>
</dbReference>
<dbReference type="GO" id="GO:0019843">
    <property type="term" value="F:rRNA binding"/>
    <property type="evidence" value="ECO:0007669"/>
    <property type="project" value="UniProtKB-UniRule"/>
</dbReference>
<dbReference type="GO" id="GO:0003735">
    <property type="term" value="F:structural constituent of ribosome"/>
    <property type="evidence" value="ECO:0007669"/>
    <property type="project" value="InterPro"/>
</dbReference>
<dbReference type="GO" id="GO:0000027">
    <property type="term" value="P:ribosomal large subunit assembly"/>
    <property type="evidence" value="ECO:0007669"/>
    <property type="project" value="UniProtKB-UniRule"/>
</dbReference>
<dbReference type="GO" id="GO:0006412">
    <property type="term" value="P:translation"/>
    <property type="evidence" value="ECO:0007669"/>
    <property type="project" value="InterPro"/>
</dbReference>
<dbReference type="CDD" id="cd07026">
    <property type="entry name" value="Ribosomal_L20"/>
    <property type="match status" value="1"/>
</dbReference>
<dbReference type="FunFam" id="1.10.1900.20:FF:000001">
    <property type="entry name" value="50S ribosomal protein L20"/>
    <property type="match status" value="1"/>
</dbReference>
<dbReference type="Gene3D" id="6.10.160.10">
    <property type="match status" value="1"/>
</dbReference>
<dbReference type="Gene3D" id="1.10.1900.20">
    <property type="entry name" value="Ribosomal protein L20"/>
    <property type="match status" value="1"/>
</dbReference>
<dbReference type="HAMAP" id="MF_00382">
    <property type="entry name" value="Ribosomal_bL20"/>
    <property type="match status" value="1"/>
</dbReference>
<dbReference type="InterPro" id="IPR005813">
    <property type="entry name" value="Ribosomal_bL20"/>
</dbReference>
<dbReference type="InterPro" id="IPR049946">
    <property type="entry name" value="RIBOSOMAL_L20_CS"/>
</dbReference>
<dbReference type="InterPro" id="IPR035566">
    <property type="entry name" value="Ribosomal_protein_bL20_C"/>
</dbReference>
<dbReference type="NCBIfam" id="TIGR01032">
    <property type="entry name" value="rplT_bact"/>
    <property type="match status" value="1"/>
</dbReference>
<dbReference type="PANTHER" id="PTHR10986">
    <property type="entry name" value="39S RIBOSOMAL PROTEIN L20"/>
    <property type="match status" value="1"/>
</dbReference>
<dbReference type="Pfam" id="PF00453">
    <property type="entry name" value="Ribosomal_L20"/>
    <property type="match status" value="1"/>
</dbReference>
<dbReference type="PRINTS" id="PR00062">
    <property type="entry name" value="RIBOSOMALL20"/>
</dbReference>
<dbReference type="SUPFAM" id="SSF74731">
    <property type="entry name" value="Ribosomal protein L20"/>
    <property type="match status" value="1"/>
</dbReference>
<dbReference type="PROSITE" id="PS00937">
    <property type="entry name" value="RIBOSOMAL_L20"/>
    <property type="match status" value="1"/>
</dbReference>
<feature type="chain" id="PRO_1000049094" description="Large ribosomal subunit protein bL20">
    <location>
        <begin position="1"/>
        <end position="115"/>
    </location>
</feature>